<comment type="function">
    <text evidence="7 11">Non-reducing polyketide synthase; part of the gene cluster that mediates the biosynthesis of mitorubrinol and mitorubrinic acid, two virulence factors that improve T.marneffei intracellular survival in macrophages (PubMed:23094121). The two polyketide synthases pks12 and pks11 are probably responsible for sequential use in the biosynthesis of mitorubrinol and mitorubrinic acid. The first part of the biosynthesis is probably catalyzed by pks12, which synthesized orsellinic acid. This tetraketide is then used as a starter unit for pks11, which possesses a SAT domain, in the second part of the biosynthesis. Pks11, contains a methyltransferase domain, also served that methylates the products, using a methyl group from S-adenosylmethionine (Probable).</text>
</comment>
<comment type="cofactor">
    <cofactor evidence="2">
        <name>pantetheine 4'-phosphate</name>
        <dbReference type="ChEBI" id="CHEBI:47942"/>
    </cofactor>
    <text evidence="2">Binds 1 phosphopantetheine covalently.</text>
</comment>
<comment type="pathway">
    <text evidence="7">Secondary metabolite biosynthesis.</text>
</comment>
<comment type="domain">
    <text evidence="10">Multidomain protein; including a starter unit:ACP transacylase (SAT) that selects the starter unit; a ketosynthase (KS) that catalyzes repeated decarboxylative condensation to elongate the polyketide backbone; a malonyl-CoA:ACP transacylase (MAT) that selects and transfers the extender unit malonyl-CoA; a product template (PT) domain that controls the immediate cyclization regioselectivity of the reactive polyketide backbone; and an acyl-carrier protein (ACP) that serves as the tether of the growing and completed polyketide via its phosphopantetheinyl arm.</text>
</comment>
<comment type="domain">
    <text evidence="1">The release of the polyketide chain from the non-reducing polyketide synthase is mediated by the thioesterase (TE) domain localized at the C-ter of the protein.</text>
</comment>
<comment type="disruption phenotype">
    <text evidence="7">Leads to the loss of the yellow composed of mitorubrinic acid and mitorubrinol (PubMed:23094121). Increases the survival of mice challenged with T.marneffei and decreases decrease survival of T.marneffei in both J774 and THP1 macrophages (PubMed:23094121).</text>
</comment>
<evidence type="ECO:0000250" key="1">
    <source>
        <dbReference type="UniProtKB" id="Q5ATJ7"/>
    </source>
</evidence>
<evidence type="ECO:0000255" key="2"/>
<evidence type="ECO:0000255" key="3">
    <source>
        <dbReference type="PROSITE-ProRule" id="PRU00258"/>
    </source>
</evidence>
<evidence type="ECO:0000255" key="4">
    <source>
        <dbReference type="PROSITE-ProRule" id="PRU01348"/>
    </source>
</evidence>
<evidence type="ECO:0000255" key="5">
    <source>
        <dbReference type="PROSITE-ProRule" id="PRU01363"/>
    </source>
</evidence>
<evidence type="ECO:0000255" key="6">
    <source>
        <dbReference type="PROSITE-ProRule" id="PRU10022"/>
    </source>
</evidence>
<evidence type="ECO:0000269" key="7">
    <source>
    </source>
</evidence>
<evidence type="ECO:0000303" key="8">
    <source>
    </source>
</evidence>
<evidence type="ECO:0000303" key="9">
    <source>
    </source>
</evidence>
<evidence type="ECO:0000305" key="10">
    <source>
    </source>
</evidence>
<evidence type="ECO:0000305" key="11">
    <source>
    </source>
</evidence>
<feature type="chain" id="PRO_0000460605" description="Non-reducing polyketide synthase pks12">
    <location>
        <begin position="1"/>
        <end position="1806"/>
    </location>
</feature>
<feature type="domain" description="Starter acyltransferase (SAT)" evidence="2">
    <location>
        <begin position="30"/>
        <end position="191"/>
    </location>
</feature>
<feature type="domain" description="Ketosynthase family 3 (KS3)" evidence="4">
    <location>
        <begin position="330"/>
        <end position="755"/>
    </location>
</feature>
<feature type="domain" description="Malonyl-CoA:ACP transacylase (MAT)" evidence="2">
    <location>
        <begin position="862"/>
        <end position="1147"/>
    </location>
</feature>
<feature type="domain" description="PKS/mFAS DH" evidence="5">
    <location>
        <begin position="1249"/>
        <end position="1558"/>
    </location>
</feature>
<feature type="domain" description="Carrier" evidence="3">
    <location>
        <begin position="1727"/>
        <end position="1804"/>
    </location>
</feature>
<feature type="region of interest" description="Malonyl-CoA:ACP transacylase (MAT) domain" evidence="1 2">
    <location>
        <begin position="860"/>
        <end position="1156"/>
    </location>
</feature>
<feature type="region of interest" description="Product template (PT) domain" evidence="1 2">
    <location>
        <begin position="1249"/>
        <end position="1558"/>
    </location>
</feature>
<feature type="region of interest" description="N-terminal hotdog fold" evidence="5">
    <location>
        <begin position="1249"/>
        <end position="1383"/>
    </location>
</feature>
<feature type="region of interest" description="C-terminal hotdog fold" evidence="5">
    <location>
        <begin position="1404"/>
        <end position="1558"/>
    </location>
</feature>
<feature type="active site" description="For beta-ketoacyl synthase activity" evidence="4">
    <location>
        <position position="504"/>
    </location>
</feature>
<feature type="active site" description="For beta-ketoacyl synthase activity" evidence="4">
    <location>
        <position position="639"/>
    </location>
</feature>
<feature type="active site" description="For beta-ketoacyl synthase activity" evidence="4">
    <location>
        <position position="678"/>
    </location>
</feature>
<feature type="active site" description="For acyl/malonyl transferase activity" evidence="6">
    <location>
        <position position="947"/>
    </location>
</feature>
<feature type="active site" description="Proton acceptor; for dehydratase activity" evidence="5">
    <location>
        <position position="1288"/>
    </location>
</feature>
<feature type="active site" description="Proton donor; for dehydratase activity" evidence="5">
    <location>
        <position position="1468"/>
    </location>
</feature>
<feature type="modified residue" description="O-(pantetheine 4'-phosphoryl)serine" evidence="3">
    <location>
        <position position="1764"/>
    </location>
</feature>
<organism>
    <name type="scientific">Talaromyces marneffei</name>
    <name type="common">Penicillium marneffei</name>
    <dbReference type="NCBI Taxonomy" id="37727"/>
    <lineage>
        <taxon>Eukaryota</taxon>
        <taxon>Fungi</taxon>
        <taxon>Dikarya</taxon>
        <taxon>Ascomycota</taxon>
        <taxon>Pezizomycotina</taxon>
        <taxon>Eurotiomycetes</taxon>
        <taxon>Eurotiomycetidae</taxon>
        <taxon>Eurotiales</taxon>
        <taxon>Trichocomaceae</taxon>
        <taxon>Talaromyces</taxon>
        <taxon>Talaromyces sect. Talaromyces</taxon>
    </lineage>
</organism>
<reference key="1">
    <citation type="journal article" date="2010" name="FEBS J.">
        <title>High diversity of polyketide synthase genes and the melanin biosynthesis gene cluster in Penicillium marneffei.</title>
        <authorList>
            <person name="Woo P.C."/>
            <person name="Tam E.W."/>
            <person name="Chong K.T."/>
            <person name="Cai J.J."/>
            <person name="Tung E.T."/>
            <person name="Ngan A.H."/>
            <person name="Lau S.K."/>
            <person name="Yuen K.Y."/>
        </authorList>
    </citation>
    <scope>NUCLEOTIDE SEQUENCE [GENOMIC DNA]</scope>
    <scope>IDENTIFICATION</scope>
    <scope>DOMAIN</scope>
    <source>
        <strain>PM1</strain>
    </source>
</reference>
<reference key="2">
    <citation type="journal article" date="2012" name="PLoS Negl. Trop. Dis.">
        <title>First discovery of two polyketide synthase genes for mitorubrinic acid and mitorubrinol yellow pigment biosynthesis and implications in virulence of Penicillium marneffei.</title>
        <authorList>
            <person name="Woo P.C."/>
            <person name="Lam C.W."/>
            <person name="Tam E.W."/>
            <person name="Leung C.K."/>
            <person name="Wong S.S."/>
            <person name="Lau S.K."/>
            <person name="Yuen K.Y."/>
        </authorList>
    </citation>
    <scope>FUNCTION</scope>
    <scope>DISRUPTION PHENOTYPE</scope>
    <scope>PATHWAY</scope>
</reference>
<keyword id="KW-0489">Methyltransferase</keyword>
<keyword id="KW-0511">Multifunctional enzyme</keyword>
<keyword id="KW-0596">Phosphopantetheine</keyword>
<keyword id="KW-0597">Phosphoprotein</keyword>
<keyword id="KW-0808">Transferase</keyword>
<keyword id="KW-0843">Virulence</keyword>
<sequence length="1806" mass="197912">MTQGPRYIRHFHDWIAATESPSTSTEMQWTDTMSGMISLPLLTIMQIVQYFQYLETREITHSQFVEEIRIGGAQGYCGGLLPAAAIAASRNEDEVVHNAGIALRLALAIGAYAELGDDENIPGPTTVVLRTKYSGQAEEIVSKFPGTYISAITDPETISIVGPVNVVEELRAYAEGQGIKATKLHLRGKVHNPENKDLCKEFINLCHKYPSMLMLPTAASLQTSLRSNKTGKELRSSATTASLSIEVLENTLANKCEWYNLLNGMAKDLDAISRTEKEHTFALFGTGRKNCVPTMPFEEKQLRISKLDIVTYVEKHDIPREGRTLDQYPENAIAIVGAGCRLPGANSIDELWEILSAGSSRVEKLRSSRFDLSTVSRGSVGPDAKQTAKRELYGNFLDDVESFDSNFFGISPREAMYMDPQQRLLLETAYEALDGSGYLRTHRRGDFDNVGCFIGASYTEYLENTSSYNPTAYTATGTIRAFQSGRISYHFGWSGPSEVIDTACSASLVAVNRACKAIQSGECPMALAGGVNIITGVNNYFDLGKAGFLSTTGQCKPFDETADGYCRADGVGLVALKSLRQAVADGNNVMGVIMGVGTNQGGLSPAITVPYYRAQISLFKNVLNQSGLKSGQISYVEAHGTGTQVGDPIEISSVREVFGGSDRSEFVNMGSLKANVGHSETAAGIGSLMKVLAMLKHGKIPPLAGFKSLNPKIPALEPDYLRIPTELQDWNSSFRAACVNSYGAAGSNSALICGEAPIVTAMTDVLPTDTNMHETSHLQYPLFLSATNNFTLKANASKLAQYVLKNQPRVADVAYTLYHRRKHHRVQWTGLAHDLESLVRSLDKIEEGLEVPASPKSVVLAFSGQSKQTIGLDPSWYVSFPRLRHYIDLCNKIVIRLGYSTILPAVFATDPVEDVVALQCGTFAFQYACAKCWIDSGLEVKAAVGHSFGELTAMAVTETLSLEDALHLVAARATLVQTKWGSERGTMLAIEATLDTTRQIITVVNENIEIACYNGQKSHVLVGTERSIGQVEHLIATDNRFKGTRNTRVKTSHGFHSVFTEPILPELDEIAQKLEFNAPSIPLETSTEKPINEGEHAVEPSRIVQHTRTPVYFGDAISRLEERLGPCIWLEAGSDSPIIPMVKRATHNPSQHTFLGLKAKDIARPIDVIPQASLTLWQEGMSVSCFDGFYSHPPNGVTSNVFNHIWLPPYQFQRTRHWLQYMDLVTEERKTVDERLRSAGAVGTIASQPQTPPLKLVTARSRDSESWSSLEFAIHSETSRFTDIVSAHAVRDQPLCPASMYMECVVMAAQMVEPSVSVKSLSFQNLSFQGALGINYNRDVSLLMEGDGEYLAWNFTVRSTGKESKGRPTTHAKGRFSVTSHIDFQLYERMLADRMNEILVHPQSERLMAGRAYTLFSRVVNYAESLRGISEITILNNRHAVAEVCRPKVSVSSSESTAVAVCDTVTLDTFIQVVGLLINSSETCPVDEVFIATGIDSIIMQDCDFSDPQHDTWKVYAMATTRSESHVAGDMFVFTKDGKLIFTGSGVQFSRFPIAKLEKVLEGIGMNSAPRSPIGNDGIGKGVTAPPSPTTQFHMNGHAKSTPNRHGLRVRTTVEMDEQTLVAQDSVSRRPSALKSAMIRNDSNLGTLGLDSLSKLEFVNQLRAQLGNEISPTQDLSQIADLYNKLFAHSSTTNSRSAHIDHVHKIELDGPSSPTAVNSPVTAGDSQSKLRIRQRILELITENSGESVSTIKDEVSLQDVGIDSLSVIELKESFEDAFSVQFGDWDFGLHLTVRELVDYVVISSNV</sequence>
<name>PKS12_TALMA</name>
<proteinExistence type="inferred from homology"/>
<accession>D7RJN6</accession>
<dbReference type="EC" id="2.3.1.-" evidence="11"/>
<dbReference type="EMBL" id="HM070056">
    <property type="protein sequence ID" value="ADH01672.1"/>
    <property type="molecule type" value="Genomic_DNA"/>
</dbReference>
<dbReference type="SMR" id="D7RJN6"/>
<dbReference type="VEuPathDB" id="FungiDB:PMAA_101600"/>
<dbReference type="GO" id="GO:0004315">
    <property type="term" value="F:3-oxoacyl-[acyl-carrier-protein] synthase activity"/>
    <property type="evidence" value="ECO:0007669"/>
    <property type="project" value="InterPro"/>
</dbReference>
<dbReference type="GO" id="GO:0004312">
    <property type="term" value="F:fatty acid synthase activity"/>
    <property type="evidence" value="ECO:0007669"/>
    <property type="project" value="TreeGrafter"/>
</dbReference>
<dbReference type="GO" id="GO:0008168">
    <property type="term" value="F:methyltransferase activity"/>
    <property type="evidence" value="ECO:0007669"/>
    <property type="project" value="UniProtKB-KW"/>
</dbReference>
<dbReference type="GO" id="GO:0006633">
    <property type="term" value="P:fatty acid biosynthetic process"/>
    <property type="evidence" value="ECO:0007669"/>
    <property type="project" value="InterPro"/>
</dbReference>
<dbReference type="GO" id="GO:0032259">
    <property type="term" value="P:methylation"/>
    <property type="evidence" value="ECO:0007669"/>
    <property type="project" value="UniProtKB-KW"/>
</dbReference>
<dbReference type="GO" id="GO:0044550">
    <property type="term" value="P:secondary metabolite biosynthetic process"/>
    <property type="evidence" value="ECO:0007669"/>
    <property type="project" value="UniProtKB-ARBA"/>
</dbReference>
<dbReference type="CDD" id="cd00833">
    <property type="entry name" value="PKS"/>
    <property type="match status" value="1"/>
</dbReference>
<dbReference type="Gene3D" id="3.30.70.3290">
    <property type="match status" value="1"/>
</dbReference>
<dbReference type="Gene3D" id="3.40.47.10">
    <property type="match status" value="1"/>
</dbReference>
<dbReference type="Gene3D" id="1.10.1200.10">
    <property type="entry name" value="ACP-like"/>
    <property type="match status" value="2"/>
</dbReference>
<dbReference type="Gene3D" id="3.40.366.10">
    <property type="entry name" value="Malonyl-Coenzyme A Acyl Carrier Protein, domain 2"/>
    <property type="match status" value="2"/>
</dbReference>
<dbReference type="Gene3D" id="3.10.129.110">
    <property type="entry name" value="Polyketide synthase dehydratase"/>
    <property type="match status" value="1"/>
</dbReference>
<dbReference type="InterPro" id="IPR001227">
    <property type="entry name" value="Ac_transferase_dom_sf"/>
</dbReference>
<dbReference type="InterPro" id="IPR036736">
    <property type="entry name" value="ACP-like_sf"/>
</dbReference>
<dbReference type="InterPro" id="IPR014043">
    <property type="entry name" value="Acyl_transferase_dom"/>
</dbReference>
<dbReference type="InterPro" id="IPR016035">
    <property type="entry name" value="Acyl_Trfase/lysoPLipase"/>
</dbReference>
<dbReference type="InterPro" id="IPR018201">
    <property type="entry name" value="Ketoacyl_synth_AS"/>
</dbReference>
<dbReference type="InterPro" id="IPR014031">
    <property type="entry name" value="Ketoacyl_synth_C"/>
</dbReference>
<dbReference type="InterPro" id="IPR014030">
    <property type="entry name" value="Ketoacyl_synth_N"/>
</dbReference>
<dbReference type="InterPro" id="IPR016036">
    <property type="entry name" value="Malonyl_transacylase_ACP-bd"/>
</dbReference>
<dbReference type="InterPro" id="IPR020841">
    <property type="entry name" value="PKS_Beta-ketoAc_synthase_dom"/>
</dbReference>
<dbReference type="InterPro" id="IPR042104">
    <property type="entry name" value="PKS_dehydratase_sf"/>
</dbReference>
<dbReference type="InterPro" id="IPR049551">
    <property type="entry name" value="PKS_DH_C"/>
</dbReference>
<dbReference type="InterPro" id="IPR049900">
    <property type="entry name" value="PKS_mFAS_DH"/>
</dbReference>
<dbReference type="InterPro" id="IPR050091">
    <property type="entry name" value="PKS_NRPS_Biosynth_Enz"/>
</dbReference>
<dbReference type="InterPro" id="IPR009081">
    <property type="entry name" value="PP-bd_ACP"/>
</dbReference>
<dbReference type="InterPro" id="IPR032088">
    <property type="entry name" value="SAT"/>
</dbReference>
<dbReference type="InterPro" id="IPR016039">
    <property type="entry name" value="Thiolase-like"/>
</dbReference>
<dbReference type="PANTHER" id="PTHR43775">
    <property type="entry name" value="FATTY ACID SYNTHASE"/>
    <property type="match status" value="1"/>
</dbReference>
<dbReference type="PANTHER" id="PTHR43775:SF21">
    <property type="entry name" value="NON-REDUCING POLYKETIDE SYNTHASE AUSA-RELATED"/>
    <property type="match status" value="1"/>
</dbReference>
<dbReference type="Pfam" id="PF00698">
    <property type="entry name" value="Acyl_transf_1"/>
    <property type="match status" value="1"/>
</dbReference>
<dbReference type="Pfam" id="PF22621">
    <property type="entry name" value="CurL-like_PKS_C"/>
    <property type="match status" value="1"/>
</dbReference>
<dbReference type="Pfam" id="PF00109">
    <property type="entry name" value="ketoacyl-synt"/>
    <property type="match status" value="1"/>
</dbReference>
<dbReference type="Pfam" id="PF02801">
    <property type="entry name" value="Ketoacyl-synt_C"/>
    <property type="match status" value="1"/>
</dbReference>
<dbReference type="Pfam" id="PF00550">
    <property type="entry name" value="PP-binding"/>
    <property type="match status" value="1"/>
</dbReference>
<dbReference type="Pfam" id="PF14765">
    <property type="entry name" value="PS-DH"/>
    <property type="match status" value="1"/>
</dbReference>
<dbReference type="Pfam" id="PF16073">
    <property type="entry name" value="SAT"/>
    <property type="match status" value="1"/>
</dbReference>
<dbReference type="SMART" id="SM00827">
    <property type="entry name" value="PKS_AT"/>
    <property type="match status" value="1"/>
</dbReference>
<dbReference type="SMART" id="SM00825">
    <property type="entry name" value="PKS_KS"/>
    <property type="match status" value="1"/>
</dbReference>
<dbReference type="SUPFAM" id="SSF47336">
    <property type="entry name" value="ACP-like"/>
    <property type="match status" value="2"/>
</dbReference>
<dbReference type="SUPFAM" id="SSF52151">
    <property type="entry name" value="FabD/lysophospholipase-like"/>
    <property type="match status" value="1"/>
</dbReference>
<dbReference type="SUPFAM" id="SSF55048">
    <property type="entry name" value="Probable ACP-binding domain of malonyl-CoA ACP transacylase"/>
    <property type="match status" value="1"/>
</dbReference>
<dbReference type="SUPFAM" id="SSF53901">
    <property type="entry name" value="Thiolase-like"/>
    <property type="match status" value="1"/>
</dbReference>
<dbReference type="PROSITE" id="PS50075">
    <property type="entry name" value="CARRIER"/>
    <property type="match status" value="1"/>
</dbReference>
<dbReference type="PROSITE" id="PS00606">
    <property type="entry name" value="KS3_1"/>
    <property type="match status" value="1"/>
</dbReference>
<dbReference type="PROSITE" id="PS52004">
    <property type="entry name" value="KS3_2"/>
    <property type="match status" value="1"/>
</dbReference>
<dbReference type="PROSITE" id="PS52019">
    <property type="entry name" value="PKS_MFAS_DH"/>
    <property type="match status" value="1"/>
</dbReference>
<protein>
    <recommendedName>
        <fullName evidence="8">Non-reducing polyketide synthase pks12</fullName>
        <shortName evidence="8">NR-PKS pks12</shortName>
        <ecNumber evidence="11">2.3.1.-</ecNumber>
    </recommendedName>
    <alternativeName>
        <fullName evidence="9">Mitorubrinol and mitorubrinic acid biosynthesis cluster protein pks12</fullName>
    </alternativeName>
</protein>
<gene>
    <name evidence="8" type="primary">pks12</name>
</gene>